<reference key="1">
    <citation type="journal article" date="2004" name="Nucleic Acids Res.">
        <title>Thermoadaptation trait revealed by the genome sequence of thermophilic Geobacillus kaustophilus.</title>
        <authorList>
            <person name="Takami H."/>
            <person name="Takaki Y."/>
            <person name="Chee G.-J."/>
            <person name="Nishi S."/>
            <person name="Shimamura S."/>
            <person name="Suzuki H."/>
            <person name="Matsui S."/>
            <person name="Uchiyama I."/>
        </authorList>
    </citation>
    <scope>NUCLEOTIDE SEQUENCE [LARGE SCALE GENOMIC DNA]</scope>
    <source>
        <strain>HTA426</strain>
    </source>
</reference>
<dbReference type="EC" id="5.3.1.4" evidence="1"/>
<dbReference type="EMBL" id="BA000043">
    <property type="protein sequence ID" value="BAD76189.1"/>
    <property type="status" value="ALT_INIT"/>
    <property type="molecule type" value="Genomic_DNA"/>
</dbReference>
<dbReference type="RefSeq" id="WP_041467871.1">
    <property type="nucleotide sequence ID" value="NC_006510.1"/>
</dbReference>
<dbReference type="PDB" id="4R1O">
    <property type="method" value="X-ray"/>
    <property type="resolution" value="2.40 A"/>
    <property type="chains" value="A/B/C/D/E/F=1-496"/>
</dbReference>
<dbReference type="PDB" id="4R1P">
    <property type="method" value="X-ray"/>
    <property type="resolution" value="2.30 A"/>
    <property type="chains" value="A/B/C/D/E/F=1-496"/>
</dbReference>
<dbReference type="PDB" id="4R1Q">
    <property type="method" value="X-ray"/>
    <property type="resolution" value="2.25 A"/>
    <property type="chains" value="A/B/C/D/E/F=1-496"/>
</dbReference>
<dbReference type="PDB" id="7CHL">
    <property type="method" value="X-ray"/>
    <property type="resolution" value="3.40 A"/>
    <property type="chains" value="A/B/C/D/E/F/G/H/I/J/K/L=133-284, A/B/C/D/E/F/G/H/I/J/K/L=384-496"/>
</dbReference>
<dbReference type="PDB" id="7CX7">
    <property type="method" value="X-ray"/>
    <property type="resolution" value="2.49 A"/>
    <property type="chains" value="A/B/C/D/E/F=33-132, A/B/C/D/E/F=285-342, A/B/C/D/E/F=487-496"/>
</dbReference>
<dbReference type="PDB" id="7CXO">
    <property type="method" value="X-ray"/>
    <property type="resolution" value="3.20 A"/>
    <property type="chains" value="A/B/C/D/E/F=133-284, A/B/C/D/E/F=384-496"/>
</dbReference>
<dbReference type="PDB" id="7CYY">
    <property type="method" value="X-ray"/>
    <property type="resolution" value="2.60 A"/>
    <property type="chains" value="A/B/C/D/E/F=33-132, A/B/C/D/E/F=285-342, A/B/C/D/E/F=487-496"/>
</dbReference>
<dbReference type="PDBsum" id="4R1O"/>
<dbReference type="PDBsum" id="4R1P"/>
<dbReference type="PDBsum" id="4R1Q"/>
<dbReference type="PDBsum" id="7CHL"/>
<dbReference type="PDBsum" id="7CX7"/>
<dbReference type="PDBsum" id="7CXO"/>
<dbReference type="PDBsum" id="7CYY"/>
<dbReference type="SMR" id="Q5KYP7"/>
<dbReference type="STRING" id="235909.GK1904"/>
<dbReference type="KEGG" id="gka:GK1904"/>
<dbReference type="PATRIC" id="fig|235909.7.peg.2042"/>
<dbReference type="eggNOG" id="COG2160">
    <property type="taxonomic scope" value="Bacteria"/>
</dbReference>
<dbReference type="HOGENOM" id="CLU_045663_0_0_9"/>
<dbReference type="BRENDA" id="5.3.1.4">
    <property type="organism ID" value="8138"/>
</dbReference>
<dbReference type="UniPathway" id="UPA00145">
    <property type="reaction ID" value="UER00565"/>
</dbReference>
<dbReference type="EvolutionaryTrace" id="Q5KYP7"/>
<dbReference type="Proteomes" id="UP000001172">
    <property type="component" value="Chromosome"/>
</dbReference>
<dbReference type="GO" id="GO:0005829">
    <property type="term" value="C:cytosol"/>
    <property type="evidence" value="ECO:0007669"/>
    <property type="project" value="TreeGrafter"/>
</dbReference>
<dbReference type="GO" id="GO:0008733">
    <property type="term" value="F:L-arabinose isomerase activity"/>
    <property type="evidence" value="ECO:0007669"/>
    <property type="project" value="UniProtKB-UniRule"/>
</dbReference>
<dbReference type="GO" id="GO:0030145">
    <property type="term" value="F:manganese ion binding"/>
    <property type="evidence" value="ECO:0007669"/>
    <property type="project" value="UniProtKB-UniRule"/>
</dbReference>
<dbReference type="GO" id="GO:0019569">
    <property type="term" value="P:L-arabinose catabolic process to xylulose 5-phosphate"/>
    <property type="evidence" value="ECO:0007669"/>
    <property type="project" value="UniProtKB-UniRule"/>
</dbReference>
<dbReference type="CDD" id="cd03557">
    <property type="entry name" value="L-arabinose_isomerase"/>
    <property type="match status" value="1"/>
</dbReference>
<dbReference type="Gene3D" id="3.40.50.10940">
    <property type="match status" value="1"/>
</dbReference>
<dbReference type="HAMAP" id="MF_00519">
    <property type="entry name" value="Arabinose_Isome"/>
    <property type="match status" value="1"/>
</dbReference>
<dbReference type="InterPro" id="IPR024664">
    <property type="entry name" value="Ara_Isoase_C"/>
</dbReference>
<dbReference type="InterPro" id="IPR055390">
    <property type="entry name" value="AraA_central"/>
</dbReference>
<dbReference type="InterPro" id="IPR055389">
    <property type="entry name" value="AraA_N"/>
</dbReference>
<dbReference type="InterPro" id="IPR038583">
    <property type="entry name" value="AraA_N_sf"/>
</dbReference>
<dbReference type="InterPro" id="IPR004216">
    <property type="entry name" value="Fuc/Ara_isomerase_C"/>
</dbReference>
<dbReference type="InterPro" id="IPR009015">
    <property type="entry name" value="Fucose_isomerase_N/cen_sf"/>
</dbReference>
<dbReference type="InterPro" id="IPR003762">
    <property type="entry name" value="Lara_isomerase"/>
</dbReference>
<dbReference type="NCBIfam" id="NF002795">
    <property type="entry name" value="PRK02929.1"/>
    <property type="match status" value="1"/>
</dbReference>
<dbReference type="PANTHER" id="PTHR38464">
    <property type="entry name" value="L-ARABINOSE ISOMERASE"/>
    <property type="match status" value="1"/>
</dbReference>
<dbReference type="PANTHER" id="PTHR38464:SF1">
    <property type="entry name" value="L-ARABINOSE ISOMERASE"/>
    <property type="match status" value="1"/>
</dbReference>
<dbReference type="Pfam" id="PF24856">
    <property type="entry name" value="AraA_central"/>
    <property type="match status" value="1"/>
</dbReference>
<dbReference type="Pfam" id="PF02610">
    <property type="entry name" value="AraA_N"/>
    <property type="match status" value="1"/>
</dbReference>
<dbReference type="Pfam" id="PF11762">
    <property type="entry name" value="Arabinose_Iso_C"/>
    <property type="match status" value="1"/>
</dbReference>
<dbReference type="PIRSF" id="PIRSF001478">
    <property type="entry name" value="L-ara_isomerase"/>
    <property type="match status" value="1"/>
</dbReference>
<dbReference type="SUPFAM" id="SSF50443">
    <property type="entry name" value="FucI/AraA C-terminal domain-like"/>
    <property type="match status" value="1"/>
</dbReference>
<dbReference type="SUPFAM" id="SSF53743">
    <property type="entry name" value="FucI/AraA N-terminal and middle domains"/>
    <property type="match status" value="1"/>
</dbReference>
<comment type="function">
    <text evidence="1">Catalyzes the conversion of L-arabinose to L-ribulose.</text>
</comment>
<comment type="catalytic activity">
    <reaction evidence="1">
        <text>beta-L-arabinopyranose = L-ribulose</text>
        <dbReference type="Rhea" id="RHEA:14821"/>
        <dbReference type="ChEBI" id="CHEBI:16880"/>
        <dbReference type="ChEBI" id="CHEBI:40886"/>
        <dbReference type="EC" id="5.3.1.4"/>
    </reaction>
</comment>
<comment type="cofactor">
    <cofactor evidence="1">
        <name>Mn(2+)</name>
        <dbReference type="ChEBI" id="CHEBI:29035"/>
    </cofactor>
    <text evidence="1">Binds 1 Mn(2+) ion per subunit.</text>
</comment>
<comment type="pathway">
    <text evidence="1">Carbohydrate degradation; L-arabinose degradation via L-ribulose; D-xylulose 5-phosphate from L-arabinose (bacterial route): step 1/3.</text>
</comment>
<comment type="similarity">
    <text evidence="1">Belongs to the arabinose isomerase family.</text>
</comment>
<comment type="sequence caution" evidence="2">
    <conflict type="erroneous initiation">
        <sequence resource="EMBL-CDS" id="BAD76189"/>
    </conflict>
</comment>
<organism>
    <name type="scientific">Geobacillus kaustophilus (strain HTA426)</name>
    <dbReference type="NCBI Taxonomy" id="235909"/>
    <lineage>
        <taxon>Bacteria</taxon>
        <taxon>Bacillati</taxon>
        <taxon>Bacillota</taxon>
        <taxon>Bacilli</taxon>
        <taxon>Bacillales</taxon>
        <taxon>Anoxybacillaceae</taxon>
        <taxon>Geobacillus</taxon>
        <taxon>Geobacillus thermoleovorans group</taxon>
    </lineage>
</organism>
<proteinExistence type="evidence at protein level"/>
<name>ARAA_GEOKA</name>
<keyword id="KW-0002">3D-structure</keyword>
<keyword id="KW-0054">Arabinose catabolism</keyword>
<keyword id="KW-0119">Carbohydrate metabolism</keyword>
<keyword id="KW-0413">Isomerase</keyword>
<keyword id="KW-0464">Manganese</keyword>
<keyword id="KW-0479">Metal-binding</keyword>
<keyword id="KW-1185">Reference proteome</keyword>
<protein>
    <recommendedName>
        <fullName evidence="1">L-arabinose isomerase</fullName>
        <ecNumber evidence="1">5.3.1.4</ecNumber>
    </recommendedName>
</protein>
<sequence length="496" mass="56105">MLSLRPYEFWFVTGSQHLYGEEALKQVEEHSRIMVNEWNRDSVFPFPFVFKSVVTTPEEIRRVCLEANASEQCAGVVTWMHTFSPAKMWIGGLLELRKPLLHLHTQFNRDIPWDSIDMDFMNLNQSAHGDREYGFIGARMGVARKVVVGHWEDPEVRERLAKWMRTAVAFAESRNLKVARFGDNMREVAVTEGDKVGAQIQFGWSVNGYGIGDLVQYIRDVSEQKVNELLDEYEELYDIVPAGRQEGPVRESIREQARIELGLKAFLQDGNFTAFTTTFEDLHGMKQLPGLAVQRLMAEGYGFGGEGDWKTAALVRLMKVMADGKGTSFMEDYTYHFEPGNELILGAHMLEVCPTIAATRPRVEVHPLSIGGKEDPARLVFDGGEGAAVNASLIDLGHRFRLIVNEVDAVKPEHDMPKLPVARILWKPRPSLRDSAEAWILAGGAHHTCFSFAVTTEQLQDFAEMAGIECVVINEHTSVSSFKNELKWNEVFWRGR</sequence>
<accession>Q5KYP7</accession>
<evidence type="ECO:0000255" key="1">
    <source>
        <dbReference type="HAMAP-Rule" id="MF_00519"/>
    </source>
</evidence>
<evidence type="ECO:0000305" key="2"/>
<evidence type="ECO:0007829" key="3">
    <source>
        <dbReference type="PDB" id="4R1Q"/>
    </source>
</evidence>
<evidence type="ECO:0007829" key="4">
    <source>
        <dbReference type="PDB" id="7CX7"/>
    </source>
</evidence>
<gene>
    <name evidence="1" type="primary">araA</name>
    <name type="ordered locus">GK1904</name>
</gene>
<feature type="chain" id="PRO_0000259339" description="L-arabinose isomerase">
    <location>
        <begin position="1"/>
        <end position="496"/>
    </location>
</feature>
<feature type="binding site" evidence="1">
    <location>
        <position position="306"/>
    </location>
    <ligand>
        <name>Mn(2+)</name>
        <dbReference type="ChEBI" id="CHEBI:29035"/>
    </ligand>
</feature>
<feature type="binding site" evidence="1">
    <location>
        <position position="331"/>
    </location>
    <ligand>
        <name>Mn(2+)</name>
        <dbReference type="ChEBI" id="CHEBI:29035"/>
    </ligand>
</feature>
<feature type="binding site" evidence="1">
    <location>
        <position position="348"/>
    </location>
    <ligand>
        <name>Mn(2+)</name>
        <dbReference type="ChEBI" id="CHEBI:29035"/>
    </ligand>
</feature>
<feature type="binding site" evidence="1">
    <location>
        <position position="447"/>
    </location>
    <ligand>
        <name>Mn(2+)</name>
        <dbReference type="ChEBI" id="CHEBI:29035"/>
    </ligand>
</feature>
<feature type="strand" evidence="3">
    <location>
        <begin position="8"/>
        <end position="14"/>
    </location>
</feature>
<feature type="helix" evidence="3">
    <location>
        <begin position="21"/>
        <end position="38"/>
    </location>
</feature>
<feature type="strand" evidence="4">
    <location>
        <begin position="40"/>
        <end position="46"/>
    </location>
</feature>
<feature type="strand" evidence="3">
    <location>
        <begin position="48"/>
        <end position="50"/>
    </location>
</feature>
<feature type="helix" evidence="3">
    <location>
        <begin position="57"/>
        <end position="69"/>
    </location>
</feature>
<feature type="strand" evidence="3">
    <location>
        <begin position="73"/>
        <end position="82"/>
    </location>
</feature>
<feature type="helix" evidence="3">
    <location>
        <begin position="86"/>
        <end position="89"/>
    </location>
</feature>
<feature type="helix" evidence="3">
    <location>
        <begin position="90"/>
        <end position="95"/>
    </location>
</feature>
<feature type="strand" evidence="3">
    <location>
        <begin position="100"/>
        <end position="104"/>
    </location>
</feature>
<feature type="strand" evidence="3">
    <location>
        <begin position="107"/>
        <end position="110"/>
    </location>
</feature>
<feature type="turn" evidence="3">
    <location>
        <begin position="113"/>
        <end position="115"/>
    </location>
</feature>
<feature type="helix" evidence="3">
    <location>
        <begin position="118"/>
        <end position="123"/>
    </location>
</feature>
<feature type="helix" evidence="3">
    <location>
        <begin position="126"/>
        <end position="139"/>
    </location>
</feature>
<feature type="strand" evidence="3">
    <location>
        <begin position="145"/>
        <end position="149"/>
    </location>
</feature>
<feature type="helix" evidence="3">
    <location>
        <begin position="154"/>
        <end position="174"/>
    </location>
</feature>
<feature type="strand" evidence="3">
    <location>
        <begin position="177"/>
        <end position="182"/>
    </location>
</feature>
<feature type="helix" evidence="3">
    <location>
        <begin position="195"/>
        <end position="202"/>
    </location>
</feature>
<feature type="strand" evidence="3">
    <location>
        <begin position="205"/>
        <end position="209"/>
    </location>
</feature>
<feature type="helix" evidence="3">
    <location>
        <begin position="211"/>
        <end position="219"/>
    </location>
</feature>
<feature type="helix" evidence="3">
    <location>
        <begin position="223"/>
        <end position="236"/>
    </location>
</feature>
<feature type="strand" evidence="3">
    <location>
        <begin position="237"/>
        <end position="239"/>
    </location>
</feature>
<feature type="helix" evidence="3">
    <location>
        <begin position="241"/>
        <end position="243"/>
    </location>
</feature>
<feature type="strand" evidence="3">
    <location>
        <begin position="244"/>
        <end position="247"/>
    </location>
</feature>
<feature type="helix" evidence="3">
    <location>
        <begin position="248"/>
        <end position="269"/>
    </location>
</feature>
<feature type="strand" evidence="3">
    <location>
        <begin position="274"/>
        <end position="276"/>
    </location>
</feature>
<feature type="helix" evidence="3">
    <location>
        <begin position="291"/>
        <end position="298"/>
    </location>
</feature>
<feature type="strand" evidence="3">
    <location>
        <begin position="302"/>
        <end position="305"/>
    </location>
</feature>
<feature type="helix" evidence="3">
    <location>
        <begin position="309"/>
        <end position="322"/>
    </location>
</feature>
<feature type="strand" evidence="3">
    <location>
        <begin position="325"/>
        <end position="336"/>
    </location>
</feature>
<feature type="strand" evidence="3">
    <location>
        <begin position="343"/>
        <end position="347"/>
    </location>
</feature>
<feature type="helix" evidence="3">
    <location>
        <begin position="354"/>
        <end position="356"/>
    </location>
</feature>
<feature type="strand" evidence="3">
    <location>
        <begin position="357"/>
        <end position="359"/>
    </location>
</feature>
<feature type="strand" evidence="3">
    <location>
        <begin position="362"/>
        <end position="365"/>
    </location>
</feature>
<feature type="turn" evidence="3">
    <location>
        <begin position="369"/>
        <end position="372"/>
    </location>
</feature>
<feature type="strand" evidence="3">
    <location>
        <begin position="377"/>
        <end position="380"/>
    </location>
</feature>
<feature type="strand" evidence="3">
    <location>
        <begin position="386"/>
        <end position="395"/>
    </location>
</feature>
<feature type="strand" evidence="3">
    <location>
        <begin position="397"/>
        <end position="410"/>
    </location>
</feature>
<feature type="strand" evidence="3">
    <location>
        <begin position="423"/>
        <end position="430"/>
    </location>
</feature>
<feature type="helix" evidence="3">
    <location>
        <begin position="432"/>
        <end position="441"/>
    </location>
</feature>
<feature type="strand" evidence="3">
    <location>
        <begin position="446"/>
        <end position="453"/>
    </location>
</feature>
<feature type="helix" evidence="3">
    <location>
        <begin position="456"/>
        <end position="466"/>
    </location>
</feature>
<feature type="strand" evidence="3">
    <location>
        <begin position="469"/>
        <end position="474"/>
    </location>
</feature>
<feature type="helix" evidence="3">
    <location>
        <begin position="479"/>
        <end position="493"/>
    </location>
</feature>